<geneLocation type="plasmid">
    <name>pINV</name>
</geneLocation>
<dbReference type="EMBL" id="D50601">
    <property type="protein sequence ID" value="BAA09149.1"/>
    <property type="status" value="ALT_INIT"/>
    <property type="molecule type" value="Genomic_DNA"/>
</dbReference>
<dbReference type="RefSeq" id="WP_000620627.1">
    <property type="nucleotide sequence ID" value="NZ_UIQD01000016.1"/>
</dbReference>
<dbReference type="STRING" id="216599.GCA_000283715_05231"/>
<dbReference type="InterPro" id="IPR013388">
    <property type="entry name" value="T3SS_OrgA/MxiK"/>
</dbReference>
<dbReference type="NCBIfam" id="TIGR02555">
    <property type="entry name" value="OrgA_MxiK"/>
    <property type="match status" value="1"/>
</dbReference>
<dbReference type="Pfam" id="PF09482">
    <property type="entry name" value="OrgA_MxiK"/>
    <property type="match status" value="1"/>
</dbReference>
<gene>
    <name type="primary">mxiK</name>
</gene>
<accession>P0A228</accession>
<accession>Q06082</accession>
<accession>Q55289</accession>
<accession>Q9AJW1</accession>
<keyword id="KW-0614">Plasmid</keyword>
<keyword id="KW-0843">Virulence</keyword>
<comment type="function">
    <text evidence="1">Necessary for the secretion of IPA invasins.</text>
</comment>
<comment type="sequence caution" evidence="2">
    <conflict type="erroneous initiation">
        <sequence resource="EMBL-CDS" id="BAA09149"/>
    </conflict>
</comment>
<feature type="chain" id="PRO_0000096664" description="Protein MxiK">
    <location>
        <begin position="1"/>
        <end position="175"/>
    </location>
</feature>
<evidence type="ECO:0000250" key="1"/>
<evidence type="ECO:0000305" key="2"/>
<organism>
    <name type="scientific">Shigella sonnei</name>
    <dbReference type="NCBI Taxonomy" id="624"/>
    <lineage>
        <taxon>Bacteria</taxon>
        <taxon>Pseudomonadati</taxon>
        <taxon>Pseudomonadota</taxon>
        <taxon>Gammaproteobacteria</taxon>
        <taxon>Enterobacterales</taxon>
        <taxon>Enterobacteriaceae</taxon>
        <taxon>Shigella</taxon>
    </lineage>
</organism>
<sequence length="175" mass="20055">MIRMDGIYKKYLSIIFDPAFYINRNRLNLPSELLENGVIRSEINNLIINKYDLNCDIEPLSGVTAMFVANWNLLPAVAYFIGSQESRLINHSEMVISYYGGKISKQGEAAIRSGFWHLIAWKENISVGIYERINLLFNPIALEGNYTPVERNLSRLNEGMQYAKRHFTGIQTSCL</sequence>
<name>MXIK_SHISO</name>
<proteinExistence type="inferred from homology"/>
<protein>
    <recommendedName>
        <fullName>Protein MxiK</fullName>
    </recommendedName>
</protein>
<reference key="1">
    <citation type="submission" date="1995-05" db="EMBL/GenBank/DDBJ databases">
        <title>Comparison and high conservation of nucleotide sequences of spa-mxi regions between S.sonnei and S.flexneri-Identification of a new gene coding plausible membrane protein.</title>
        <authorList>
            <person name="Arakawa E."/>
            <person name="Kato J."/>
            <person name="Ito K."/>
            <person name="Watanabe H."/>
        </authorList>
    </citation>
    <scope>NUCLEOTIDE SEQUENCE [GENOMIC DNA]</scope>
    <source>
        <strain>HW383</strain>
    </source>
</reference>